<dbReference type="EC" id="7.1.2.2" evidence="1"/>
<dbReference type="EMBL" id="CP001196">
    <property type="protein sequence ID" value="ACI91739.1"/>
    <property type="molecule type" value="Genomic_DNA"/>
</dbReference>
<dbReference type="EMBL" id="CP002826">
    <property type="protein sequence ID" value="AEI08023.1"/>
    <property type="molecule type" value="Genomic_DNA"/>
</dbReference>
<dbReference type="RefSeq" id="WP_012561770.1">
    <property type="nucleotide sequence ID" value="NC_015684.1"/>
</dbReference>
<dbReference type="SMR" id="B6JD09"/>
<dbReference type="STRING" id="504832.OCA5_c33490"/>
<dbReference type="KEGG" id="oca:OCAR_4595"/>
<dbReference type="KEGG" id="ocg:OCA5_c33490"/>
<dbReference type="PATRIC" id="fig|504832.7.peg.3520"/>
<dbReference type="eggNOG" id="COG0055">
    <property type="taxonomic scope" value="Bacteria"/>
</dbReference>
<dbReference type="HOGENOM" id="CLU_022398_0_2_5"/>
<dbReference type="OrthoDB" id="9801639at2"/>
<dbReference type="Proteomes" id="UP000007730">
    <property type="component" value="Chromosome"/>
</dbReference>
<dbReference type="GO" id="GO:0005886">
    <property type="term" value="C:plasma membrane"/>
    <property type="evidence" value="ECO:0007669"/>
    <property type="project" value="UniProtKB-SubCell"/>
</dbReference>
<dbReference type="GO" id="GO:0045259">
    <property type="term" value="C:proton-transporting ATP synthase complex"/>
    <property type="evidence" value="ECO:0007669"/>
    <property type="project" value="UniProtKB-KW"/>
</dbReference>
<dbReference type="GO" id="GO:0005524">
    <property type="term" value="F:ATP binding"/>
    <property type="evidence" value="ECO:0007669"/>
    <property type="project" value="UniProtKB-UniRule"/>
</dbReference>
<dbReference type="GO" id="GO:0016887">
    <property type="term" value="F:ATP hydrolysis activity"/>
    <property type="evidence" value="ECO:0007669"/>
    <property type="project" value="InterPro"/>
</dbReference>
<dbReference type="GO" id="GO:0046933">
    <property type="term" value="F:proton-transporting ATP synthase activity, rotational mechanism"/>
    <property type="evidence" value="ECO:0007669"/>
    <property type="project" value="UniProtKB-UniRule"/>
</dbReference>
<dbReference type="CDD" id="cd18110">
    <property type="entry name" value="ATP-synt_F1_beta_C"/>
    <property type="match status" value="1"/>
</dbReference>
<dbReference type="CDD" id="cd18115">
    <property type="entry name" value="ATP-synt_F1_beta_N"/>
    <property type="match status" value="1"/>
</dbReference>
<dbReference type="CDD" id="cd01133">
    <property type="entry name" value="F1-ATPase_beta_CD"/>
    <property type="match status" value="1"/>
</dbReference>
<dbReference type="FunFam" id="1.10.1140.10:FF:000001">
    <property type="entry name" value="ATP synthase subunit beta"/>
    <property type="match status" value="1"/>
</dbReference>
<dbReference type="FunFam" id="2.40.10.170:FF:000004">
    <property type="entry name" value="ATP synthase subunit beta"/>
    <property type="match status" value="1"/>
</dbReference>
<dbReference type="FunFam" id="3.40.50.300:FF:000026">
    <property type="entry name" value="ATP synthase subunit beta"/>
    <property type="match status" value="1"/>
</dbReference>
<dbReference type="Gene3D" id="2.40.10.170">
    <property type="match status" value="1"/>
</dbReference>
<dbReference type="Gene3D" id="1.10.1140.10">
    <property type="entry name" value="Bovine Mitochondrial F1-atpase, Atp Synthase Beta Chain, Chain D, domain 3"/>
    <property type="match status" value="1"/>
</dbReference>
<dbReference type="Gene3D" id="3.40.50.300">
    <property type="entry name" value="P-loop containing nucleotide triphosphate hydrolases"/>
    <property type="match status" value="1"/>
</dbReference>
<dbReference type="HAMAP" id="MF_01347">
    <property type="entry name" value="ATP_synth_beta_bact"/>
    <property type="match status" value="1"/>
</dbReference>
<dbReference type="InterPro" id="IPR003593">
    <property type="entry name" value="AAA+_ATPase"/>
</dbReference>
<dbReference type="InterPro" id="IPR055190">
    <property type="entry name" value="ATP-synt_VA_C"/>
</dbReference>
<dbReference type="InterPro" id="IPR005722">
    <property type="entry name" value="ATP_synth_F1_bsu"/>
</dbReference>
<dbReference type="InterPro" id="IPR020003">
    <property type="entry name" value="ATPase_a/bsu_AS"/>
</dbReference>
<dbReference type="InterPro" id="IPR050053">
    <property type="entry name" value="ATPase_alpha/beta_chains"/>
</dbReference>
<dbReference type="InterPro" id="IPR004100">
    <property type="entry name" value="ATPase_F1/V1/A1_a/bsu_N"/>
</dbReference>
<dbReference type="InterPro" id="IPR036121">
    <property type="entry name" value="ATPase_F1/V1/A1_a/bsu_N_sf"/>
</dbReference>
<dbReference type="InterPro" id="IPR000194">
    <property type="entry name" value="ATPase_F1/V1/A1_a/bsu_nucl-bd"/>
</dbReference>
<dbReference type="InterPro" id="IPR024034">
    <property type="entry name" value="ATPase_F1/V1_b/a_C"/>
</dbReference>
<dbReference type="InterPro" id="IPR027417">
    <property type="entry name" value="P-loop_NTPase"/>
</dbReference>
<dbReference type="NCBIfam" id="TIGR01039">
    <property type="entry name" value="atpD"/>
    <property type="match status" value="1"/>
</dbReference>
<dbReference type="PANTHER" id="PTHR15184">
    <property type="entry name" value="ATP SYNTHASE"/>
    <property type="match status" value="1"/>
</dbReference>
<dbReference type="PANTHER" id="PTHR15184:SF71">
    <property type="entry name" value="ATP SYNTHASE SUBUNIT BETA, MITOCHONDRIAL"/>
    <property type="match status" value="1"/>
</dbReference>
<dbReference type="Pfam" id="PF00006">
    <property type="entry name" value="ATP-synt_ab"/>
    <property type="match status" value="1"/>
</dbReference>
<dbReference type="Pfam" id="PF02874">
    <property type="entry name" value="ATP-synt_ab_N"/>
    <property type="match status" value="1"/>
</dbReference>
<dbReference type="Pfam" id="PF22919">
    <property type="entry name" value="ATP-synt_VA_C"/>
    <property type="match status" value="1"/>
</dbReference>
<dbReference type="PIRSF" id="PIRSF039072">
    <property type="entry name" value="ATPase_subunit_beta"/>
    <property type="match status" value="1"/>
</dbReference>
<dbReference type="SMART" id="SM00382">
    <property type="entry name" value="AAA"/>
    <property type="match status" value="1"/>
</dbReference>
<dbReference type="SUPFAM" id="SSF47917">
    <property type="entry name" value="C-terminal domain of alpha and beta subunits of F1 ATP synthase"/>
    <property type="match status" value="1"/>
</dbReference>
<dbReference type="SUPFAM" id="SSF50615">
    <property type="entry name" value="N-terminal domain of alpha and beta subunits of F1 ATP synthase"/>
    <property type="match status" value="1"/>
</dbReference>
<dbReference type="SUPFAM" id="SSF52540">
    <property type="entry name" value="P-loop containing nucleoside triphosphate hydrolases"/>
    <property type="match status" value="1"/>
</dbReference>
<dbReference type="PROSITE" id="PS00152">
    <property type="entry name" value="ATPASE_ALPHA_BETA"/>
    <property type="match status" value="1"/>
</dbReference>
<feature type="chain" id="PRO_1000143527" description="ATP synthase subunit beta">
    <location>
        <begin position="1"/>
        <end position="476"/>
    </location>
</feature>
<feature type="binding site" evidence="1">
    <location>
        <begin position="154"/>
        <end position="161"/>
    </location>
    <ligand>
        <name>ATP</name>
        <dbReference type="ChEBI" id="CHEBI:30616"/>
    </ligand>
</feature>
<evidence type="ECO:0000255" key="1">
    <source>
        <dbReference type="HAMAP-Rule" id="MF_01347"/>
    </source>
</evidence>
<comment type="function">
    <text evidence="1">Produces ATP from ADP in the presence of a proton gradient across the membrane. The catalytic sites are hosted primarily by the beta subunits.</text>
</comment>
<comment type="catalytic activity">
    <reaction evidence="1">
        <text>ATP + H2O + 4 H(+)(in) = ADP + phosphate + 5 H(+)(out)</text>
        <dbReference type="Rhea" id="RHEA:57720"/>
        <dbReference type="ChEBI" id="CHEBI:15377"/>
        <dbReference type="ChEBI" id="CHEBI:15378"/>
        <dbReference type="ChEBI" id="CHEBI:30616"/>
        <dbReference type="ChEBI" id="CHEBI:43474"/>
        <dbReference type="ChEBI" id="CHEBI:456216"/>
        <dbReference type="EC" id="7.1.2.2"/>
    </reaction>
</comment>
<comment type="subunit">
    <text evidence="1">F-type ATPases have 2 components, CF(1) - the catalytic core - and CF(0) - the membrane proton channel. CF(1) has five subunits: alpha(3), beta(3), gamma(1), delta(1), epsilon(1). CF(0) has three main subunits: a(1), b(2) and c(9-12). The alpha and beta chains form an alternating ring which encloses part of the gamma chain. CF(1) is attached to CF(0) by a central stalk formed by the gamma and epsilon chains, while a peripheral stalk is formed by the delta and b chains.</text>
</comment>
<comment type="subcellular location">
    <subcellularLocation>
        <location evidence="1">Cell inner membrane</location>
        <topology evidence="1">Peripheral membrane protein</topology>
    </subcellularLocation>
</comment>
<comment type="similarity">
    <text evidence="1">Belongs to the ATPase alpha/beta chains family.</text>
</comment>
<protein>
    <recommendedName>
        <fullName evidence="1">ATP synthase subunit beta</fullName>
        <ecNumber evidence="1">7.1.2.2</ecNumber>
    </recommendedName>
    <alternativeName>
        <fullName evidence="1">ATP synthase F1 sector subunit beta</fullName>
    </alternativeName>
    <alternativeName>
        <fullName evidence="1">F-ATPase subunit beta</fullName>
    </alternativeName>
</protein>
<reference key="1">
    <citation type="journal article" date="2008" name="J. Bacteriol.">
        <title>Genome sequence of the chemolithoautotrophic bacterium Oligotropha carboxidovorans OM5T.</title>
        <authorList>
            <person name="Paul D."/>
            <person name="Bridges S."/>
            <person name="Burgess S.C."/>
            <person name="Dandass Y."/>
            <person name="Lawrence M.L."/>
        </authorList>
    </citation>
    <scope>NUCLEOTIDE SEQUENCE [LARGE SCALE GENOMIC DNA]</scope>
    <source>
        <strain>ATCC 49405 / DSM 1227 / KCTC 32145 / OM5</strain>
    </source>
</reference>
<reference key="2">
    <citation type="journal article" date="2011" name="J. Bacteriol.">
        <title>Complete genome sequences of the chemolithoautotrophic Oligotropha carboxidovorans strains OM4 and OM5.</title>
        <authorList>
            <person name="Volland S."/>
            <person name="Rachinger M."/>
            <person name="Strittmatter A."/>
            <person name="Daniel R."/>
            <person name="Gottschalk G."/>
            <person name="Meyer O."/>
        </authorList>
    </citation>
    <scope>NUCLEOTIDE SEQUENCE [LARGE SCALE GENOMIC DNA]</scope>
    <source>
        <strain>ATCC 49405 / DSM 1227 / KCTC 32145 / OM5</strain>
    </source>
</reference>
<proteinExistence type="inferred from homology"/>
<organism>
    <name type="scientific">Afipia carboxidovorans (strain ATCC 49405 / DSM 1227 / KCTC 32145 / OM5)</name>
    <name type="common">Oligotropha carboxidovorans</name>
    <dbReference type="NCBI Taxonomy" id="504832"/>
    <lineage>
        <taxon>Bacteria</taxon>
        <taxon>Pseudomonadati</taxon>
        <taxon>Pseudomonadota</taxon>
        <taxon>Alphaproteobacteria</taxon>
        <taxon>Hyphomicrobiales</taxon>
        <taxon>Nitrobacteraceae</taxon>
        <taxon>Afipia</taxon>
    </lineage>
</organism>
<accession>B6JD09</accession>
<accession>F8BTY1</accession>
<sequence length="476" mass="50705">MAQPANQVGRITQVIGAVVDVQFDGYLPAILNAIETTNQGHRLVLEVAQHLGESTVRAIAMDTTEGLVRGQEVTDTGAPIKVPVGEGTLGRIMNVVGEPVDEGGPVKADGTRAIHQEAPAYTEQSTEAEILVTGIKVVDLLAPYAKGGKIGLFGGAGVGKTVLIQELINNVAKAHGGYSVFAGVGERTREGNDLYHEFIESGVNKKGGGEGSKCALVYGQMNEPPGARARVGLTGLTVAEHFRDQGQDVLFFVDNIFRFTQAGSEVSALLGRIPSAVGYQPTLATDMGALQERITTTTKGSITSVQAIYVPADDLTDPAPATSFAHLDATTVLNRAISEKGIYPAVDPLDSTSRMLSPLVVGEEHYQTARMVQQVLQRYKSLQDIIAILGMDELSEEDKLTVARARKIERFLSQPFHVAEVFTGSPGKFVELADTIKGFKGLCEGKYDHLPEAAFYMVGTIEEAVEKGKKLAAEAA</sequence>
<name>ATPB_AFIC5</name>
<keyword id="KW-0066">ATP synthesis</keyword>
<keyword id="KW-0067">ATP-binding</keyword>
<keyword id="KW-0997">Cell inner membrane</keyword>
<keyword id="KW-1003">Cell membrane</keyword>
<keyword id="KW-0139">CF(1)</keyword>
<keyword id="KW-0375">Hydrogen ion transport</keyword>
<keyword id="KW-0406">Ion transport</keyword>
<keyword id="KW-0472">Membrane</keyword>
<keyword id="KW-0547">Nucleotide-binding</keyword>
<keyword id="KW-1185">Reference proteome</keyword>
<keyword id="KW-1278">Translocase</keyword>
<keyword id="KW-0813">Transport</keyword>
<gene>
    <name evidence="1" type="primary">atpD</name>
    <name type="ordered locus">OCAR_4595</name>
    <name type="ordered locus">OCA5_c33490</name>
</gene>